<proteinExistence type="predicted"/>
<sequence length="357" mass="40580">MTNDYQQLNYLVETDDEADIIIANLVKQLNELKEILLSLDNQDLEINQVNHRTTVHNTSSNTSNNSTSNNIADGNYNSNFFHNFSKETLQTQAKRGFLLLERCSLVGLQQLELEYLNVLGRSFESHQDKINFLVNLRDLTNDHLLDTEKIVSTLEQIFNVIGGTEYTPILNSFFNQSLNDPDPIQREIGLKQFVANLRQRFKTLLQKTNNSIQQLEAEIQIPTTHIKSDEVMFGPPDMNERLVLNDSETDAILRSIEAELESALQNKKQVVVTAVPPIAANLATDSISQETLEHNLNNTETVNTTTVTVTSASETQVRKPQISLRPIFQGNFPKRLSREDIQRYAHQLQELEQSNEG</sequence>
<protein>
    <recommendedName>
        <fullName>Uncharacterized protein MG218.1 homolog</fullName>
    </recommendedName>
</protein>
<name>Y311_MYCPN</name>
<feature type="chain" id="PRO_0000210461" description="Uncharacterized protein MG218.1 homolog">
    <location>
        <begin position="1"/>
        <end position="357"/>
    </location>
</feature>
<dbReference type="EMBL" id="U00089">
    <property type="protein sequence ID" value="AAB96173.1"/>
    <property type="molecule type" value="Genomic_DNA"/>
</dbReference>
<dbReference type="EMBL" id="U59896">
    <property type="protein sequence ID" value="AAB52528.1"/>
    <property type="molecule type" value="Genomic_DNA"/>
</dbReference>
<dbReference type="PIR" id="S73851">
    <property type="entry name" value="S73851"/>
</dbReference>
<dbReference type="RefSeq" id="NP_109999.1">
    <property type="nucleotide sequence ID" value="NC_000912.1"/>
</dbReference>
<dbReference type="RefSeq" id="WP_010874667.1">
    <property type="nucleotide sequence ID" value="NZ_OU342337.1"/>
</dbReference>
<dbReference type="SMR" id="P75470"/>
<dbReference type="IntAct" id="P75470">
    <property type="interactions" value="2"/>
</dbReference>
<dbReference type="STRING" id="272634.MPN_311"/>
<dbReference type="EnsemblBacteria" id="AAB96173">
    <property type="protein sequence ID" value="AAB96173"/>
    <property type="gene ID" value="MPN_311"/>
</dbReference>
<dbReference type="KEGG" id="mpn:MPN_311"/>
<dbReference type="PATRIC" id="fig|272634.6.peg.335"/>
<dbReference type="HOGENOM" id="CLU_775731_0_0_14"/>
<dbReference type="OrthoDB" id="9960111at2"/>
<dbReference type="BioCyc" id="MPNE272634:G1GJ3-497-MONOMER"/>
<dbReference type="Proteomes" id="UP000000808">
    <property type="component" value="Chromosome"/>
</dbReference>
<dbReference type="InterPro" id="IPR055086">
    <property type="entry name" value="MG491_central"/>
</dbReference>
<dbReference type="Pfam" id="PF22373">
    <property type="entry name" value="MG491_central"/>
    <property type="match status" value="1"/>
</dbReference>
<gene>
    <name type="ordered locus">MPN_311</name>
    <name type="ORF">F10_orf357</name>
    <name type="ORF">MP525</name>
</gene>
<accession>P75470</accession>
<accession>O08089</accession>
<organism>
    <name type="scientific">Mycoplasma pneumoniae (strain ATCC 29342 / M129 / Subtype 1)</name>
    <name type="common">Mycoplasmoides pneumoniae</name>
    <dbReference type="NCBI Taxonomy" id="272634"/>
    <lineage>
        <taxon>Bacteria</taxon>
        <taxon>Bacillati</taxon>
        <taxon>Mycoplasmatota</taxon>
        <taxon>Mycoplasmoidales</taxon>
        <taxon>Mycoplasmoidaceae</taxon>
        <taxon>Mycoplasmoides</taxon>
    </lineage>
</organism>
<reference key="1">
    <citation type="journal article" date="1996" name="Nucleic Acids Res.">
        <title>Complete sequence analysis of the genome of the bacterium Mycoplasma pneumoniae.</title>
        <authorList>
            <person name="Himmelreich R."/>
            <person name="Hilbert H."/>
            <person name="Plagens H."/>
            <person name="Pirkl E."/>
            <person name="Li B.-C."/>
            <person name="Herrmann R."/>
        </authorList>
    </citation>
    <scope>NUCLEOTIDE SEQUENCE [LARGE SCALE GENOMIC DNA]</scope>
    <source>
        <strain>ATCC 29342 / M129 / Subtype 1</strain>
    </source>
</reference>
<reference key="2">
    <citation type="journal article" date="1997" name="J. Bacteriol.">
        <title>Transposon mutagenesis reinforces the correlation between Mycoplasma pneumoniae cytoskeletal protein HMW2 and cytadherence.</title>
        <authorList>
            <person name="Krause D.C."/>
            <person name="Proft T."/>
            <person name="Hedreyda C.T."/>
            <person name="Hilbert H."/>
            <person name="Plagens H."/>
            <person name="Herrmann R."/>
        </authorList>
    </citation>
    <scope>NUCLEOTIDE SEQUENCE [GENOMIC DNA]</scope>
    <source>
        <strain>ATCC 29342 / M129 / Subtype 1</strain>
    </source>
</reference>
<keyword id="KW-1185">Reference proteome</keyword>